<organism>
    <name type="scientific">Homo sapiens</name>
    <name type="common">Human</name>
    <dbReference type="NCBI Taxonomy" id="9606"/>
    <lineage>
        <taxon>Eukaryota</taxon>
        <taxon>Metazoa</taxon>
        <taxon>Chordata</taxon>
        <taxon>Craniata</taxon>
        <taxon>Vertebrata</taxon>
        <taxon>Euteleostomi</taxon>
        <taxon>Mammalia</taxon>
        <taxon>Eutheria</taxon>
        <taxon>Euarchontoglires</taxon>
        <taxon>Primates</taxon>
        <taxon>Haplorrhini</taxon>
        <taxon>Catarrhini</taxon>
        <taxon>Hominidae</taxon>
        <taxon>Homo</taxon>
    </lineage>
</organism>
<protein>
    <recommendedName>
        <fullName>Uncharacterized protein C2orf66</fullName>
    </recommendedName>
</protein>
<evidence type="ECO:0000255" key="1"/>
<evidence type="ECO:0000305" key="2"/>
<feature type="signal peptide" evidence="1">
    <location>
        <begin position="1"/>
        <end position="38"/>
    </location>
</feature>
<feature type="chain" id="PRO_0000317179" description="Uncharacterized protein C2orf66">
    <location>
        <begin position="39"/>
        <end position="117"/>
    </location>
</feature>
<accession>Q6UXQ4</accession>
<accession>B2RNW3</accession>
<name>CB066_HUMAN</name>
<proteinExistence type="inferred from homology"/>
<sequence length="117" mass="13321">MIIDSSRIPSFTQLHSTMTRAPLLLLCVALVLLGHVNGATVRNEDKWKPLNNPRNRDLFFRRLQAYFKGRGLDLGTFPNPFPTNENPRPLSFQSELTASASADYEEQKNSFHNYLKG</sequence>
<comment type="subcellular location">
    <subcellularLocation>
        <location evidence="2">Secreted</location>
    </subcellularLocation>
</comment>
<gene>
    <name type="primary">C2orf66</name>
    <name type="ORF">UNQ6411/PRO21186</name>
</gene>
<keyword id="KW-1185">Reference proteome</keyword>
<keyword id="KW-0964">Secreted</keyword>
<keyword id="KW-0732">Signal</keyword>
<reference key="1">
    <citation type="journal article" date="2003" name="Genome Res.">
        <title>The secreted protein discovery initiative (SPDI), a large-scale effort to identify novel human secreted and transmembrane proteins: a bioinformatics assessment.</title>
        <authorList>
            <person name="Clark H.F."/>
            <person name="Gurney A.L."/>
            <person name="Abaya E."/>
            <person name="Baker K."/>
            <person name="Baldwin D.T."/>
            <person name="Brush J."/>
            <person name="Chen J."/>
            <person name="Chow B."/>
            <person name="Chui C."/>
            <person name="Crowley C."/>
            <person name="Currell B."/>
            <person name="Deuel B."/>
            <person name="Dowd P."/>
            <person name="Eaton D."/>
            <person name="Foster J.S."/>
            <person name="Grimaldi C."/>
            <person name="Gu Q."/>
            <person name="Hass P.E."/>
            <person name="Heldens S."/>
            <person name="Huang A."/>
            <person name="Kim H.S."/>
            <person name="Klimowski L."/>
            <person name="Jin Y."/>
            <person name="Johnson S."/>
            <person name="Lee J."/>
            <person name="Lewis L."/>
            <person name="Liao D."/>
            <person name="Mark M.R."/>
            <person name="Robbie E."/>
            <person name="Sanchez C."/>
            <person name="Schoenfeld J."/>
            <person name="Seshagiri S."/>
            <person name="Simmons L."/>
            <person name="Singh J."/>
            <person name="Smith V."/>
            <person name="Stinson J."/>
            <person name="Vagts A."/>
            <person name="Vandlen R.L."/>
            <person name="Watanabe C."/>
            <person name="Wieand D."/>
            <person name="Woods K."/>
            <person name="Xie M.-H."/>
            <person name="Yansura D.G."/>
            <person name="Yi S."/>
            <person name="Yu G."/>
            <person name="Yuan J."/>
            <person name="Zhang M."/>
            <person name="Zhang Z."/>
            <person name="Goddard A.D."/>
            <person name="Wood W.I."/>
            <person name="Godowski P.J."/>
            <person name="Gray A.M."/>
        </authorList>
    </citation>
    <scope>NUCLEOTIDE SEQUENCE [LARGE SCALE MRNA]</scope>
</reference>
<reference key="2">
    <citation type="submission" date="2005-07" db="EMBL/GenBank/DDBJ databases">
        <authorList>
            <person name="Mural R.J."/>
            <person name="Istrail S."/>
            <person name="Sutton G.G."/>
            <person name="Florea L."/>
            <person name="Halpern A.L."/>
            <person name="Mobarry C.M."/>
            <person name="Lippert R."/>
            <person name="Walenz B."/>
            <person name="Shatkay H."/>
            <person name="Dew I."/>
            <person name="Miller J.R."/>
            <person name="Flanigan M.J."/>
            <person name="Edwards N.J."/>
            <person name="Bolanos R."/>
            <person name="Fasulo D."/>
            <person name="Halldorsson B.V."/>
            <person name="Hannenhalli S."/>
            <person name="Turner R."/>
            <person name="Yooseph S."/>
            <person name="Lu F."/>
            <person name="Nusskern D.R."/>
            <person name="Shue B.C."/>
            <person name="Zheng X.H."/>
            <person name="Zhong F."/>
            <person name="Delcher A.L."/>
            <person name="Huson D.H."/>
            <person name="Kravitz S.A."/>
            <person name="Mouchard L."/>
            <person name="Reinert K."/>
            <person name="Remington K.A."/>
            <person name="Clark A.G."/>
            <person name="Waterman M.S."/>
            <person name="Eichler E.E."/>
            <person name="Adams M.D."/>
            <person name="Hunkapiller M.W."/>
            <person name="Myers E.W."/>
            <person name="Venter J.C."/>
        </authorList>
    </citation>
    <scope>NUCLEOTIDE SEQUENCE [LARGE SCALE GENOMIC DNA]</scope>
</reference>
<reference key="3">
    <citation type="journal article" date="2004" name="Genome Res.">
        <title>The status, quality, and expansion of the NIH full-length cDNA project: the Mammalian Gene Collection (MGC).</title>
        <authorList>
            <consortium name="The MGC Project Team"/>
        </authorList>
    </citation>
    <scope>NUCLEOTIDE SEQUENCE [LARGE SCALE MRNA]</scope>
    <source>
        <tissue>Testis</tissue>
    </source>
</reference>
<dbReference type="EMBL" id="AY358249">
    <property type="protein sequence ID" value="AAQ88616.1"/>
    <property type="molecule type" value="mRNA"/>
</dbReference>
<dbReference type="EMBL" id="CH471063">
    <property type="protein sequence ID" value="EAW70135.1"/>
    <property type="molecule type" value="Genomic_DNA"/>
</dbReference>
<dbReference type="EMBL" id="BC137150">
    <property type="protein sequence ID" value="AAI37151.1"/>
    <property type="molecule type" value="mRNA"/>
</dbReference>
<dbReference type="EMBL" id="BC137151">
    <property type="protein sequence ID" value="AAI37152.1"/>
    <property type="molecule type" value="mRNA"/>
</dbReference>
<dbReference type="RefSeq" id="NP_998773.1">
    <property type="nucleotide sequence ID" value="NM_213608.2"/>
</dbReference>
<dbReference type="BioGRID" id="134876">
    <property type="interactions" value="4"/>
</dbReference>
<dbReference type="IntAct" id="Q6UXQ4">
    <property type="interactions" value="1"/>
</dbReference>
<dbReference type="STRING" id="9606.ENSP00000500939"/>
<dbReference type="BioMuta" id="C2orf66"/>
<dbReference type="DMDM" id="74738241"/>
<dbReference type="PaxDb" id="9606-ENSP00000339384"/>
<dbReference type="DNASU" id="401027"/>
<dbReference type="GeneID" id="401027"/>
<dbReference type="KEGG" id="hsa:401027"/>
<dbReference type="UCSC" id="uc002utv.4">
    <property type="organism name" value="human"/>
</dbReference>
<dbReference type="AGR" id="HGNC:33809"/>
<dbReference type="CTD" id="401027"/>
<dbReference type="GeneCards" id="C2orf66"/>
<dbReference type="HGNC" id="HGNC:33809">
    <property type="gene designation" value="C2orf66"/>
</dbReference>
<dbReference type="neXtProt" id="NX_Q6UXQ4"/>
<dbReference type="PharmGKB" id="PA162379428"/>
<dbReference type="eggNOG" id="ENOG502S75F">
    <property type="taxonomic scope" value="Eukaryota"/>
</dbReference>
<dbReference type="HOGENOM" id="CLU_172228_0_0_1"/>
<dbReference type="InParanoid" id="Q6UXQ4"/>
<dbReference type="OrthoDB" id="9882381at2759"/>
<dbReference type="PAN-GO" id="Q6UXQ4">
    <property type="GO annotations" value="0 GO annotations based on evolutionary models"/>
</dbReference>
<dbReference type="PhylomeDB" id="Q6UXQ4"/>
<dbReference type="PathwayCommons" id="Q6UXQ4"/>
<dbReference type="BioGRID-ORCS" id="401027">
    <property type="hits" value="19 hits in 1124 CRISPR screens"/>
</dbReference>
<dbReference type="GenomeRNAi" id="401027"/>
<dbReference type="Pharos" id="Q6UXQ4">
    <property type="development level" value="Tdark"/>
</dbReference>
<dbReference type="PRO" id="PR:Q6UXQ4"/>
<dbReference type="Proteomes" id="UP000005640">
    <property type="component" value="Chromosome 2"/>
</dbReference>
<dbReference type="RNAct" id="Q6UXQ4">
    <property type="molecule type" value="protein"/>
</dbReference>
<dbReference type="GO" id="GO:0005576">
    <property type="term" value="C:extracellular region"/>
    <property type="evidence" value="ECO:0007669"/>
    <property type="project" value="UniProtKB-SubCell"/>
</dbReference>
<dbReference type="InterPro" id="IPR031699">
    <property type="entry name" value="DUF4720"/>
</dbReference>
<dbReference type="PANTHER" id="PTHR47620">
    <property type="entry name" value="CHROMOSOME 2 OPEN READING FRAME 66"/>
    <property type="match status" value="1"/>
</dbReference>
<dbReference type="PANTHER" id="PTHR47620:SF1">
    <property type="entry name" value="GENE, 34066-RELATED"/>
    <property type="match status" value="1"/>
</dbReference>
<dbReference type="Pfam" id="PF15846">
    <property type="entry name" value="DUF4720"/>
    <property type="match status" value="1"/>
</dbReference>